<proteinExistence type="inferred from homology"/>
<comment type="similarity">
    <text evidence="1">Belongs to the UPF0301 (AlgH) family.</text>
</comment>
<organism>
    <name type="scientific">Histophilus somni (strain 129Pt)</name>
    <name type="common">Haemophilus somnus</name>
    <dbReference type="NCBI Taxonomy" id="205914"/>
    <lineage>
        <taxon>Bacteria</taxon>
        <taxon>Pseudomonadati</taxon>
        <taxon>Pseudomonadota</taxon>
        <taxon>Gammaproteobacteria</taxon>
        <taxon>Pasteurellales</taxon>
        <taxon>Pasteurellaceae</taxon>
        <taxon>Histophilus</taxon>
    </lineage>
</organism>
<feature type="chain" id="PRO_1000148384" description="UPF0301 protein HS_0009">
    <location>
        <begin position="1"/>
        <end position="187"/>
    </location>
</feature>
<reference key="1">
    <citation type="journal article" date="2007" name="J. Bacteriol.">
        <title>Complete genome sequence of Haemophilus somnus (Histophilus somni) strain 129Pt and comparison to Haemophilus ducreyi 35000HP and Haemophilus influenzae Rd.</title>
        <authorList>
            <person name="Challacombe J.F."/>
            <person name="Duncan A.J."/>
            <person name="Brettin T.S."/>
            <person name="Bruce D."/>
            <person name="Chertkov O."/>
            <person name="Detter J.C."/>
            <person name="Han C.S."/>
            <person name="Misra M."/>
            <person name="Richardson P."/>
            <person name="Tapia R."/>
            <person name="Thayer N."/>
            <person name="Xie G."/>
            <person name="Inzana T.J."/>
        </authorList>
    </citation>
    <scope>NUCLEOTIDE SEQUENCE [LARGE SCALE GENOMIC DNA]</scope>
    <source>
        <strain>129Pt</strain>
    </source>
</reference>
<sequence>MNLQDHFLIAMPHLEDENFQRSVVYICENNEQGSMGLVLTQATDLSIAELCAKMNFMMADEREYSDKLVLLGGPVNLEHGFILHKKTAQEFQHSYKVTDQIYLTTSADIINTFGTAQSPEKYLVTLGCARWEPNQLENEIANNDWLVVPADEDILFDVDISERWFAANQLLGIEHVNFSYQQQMEHS</sequence>
<evidence type="ECO:0000255" key="1">
    <source>
        <dbReference type="HAMAP-Rule" id="MF_00758"/>
    </source>
</evidence>
<protein>
    <recommendedName>
        <fullName evidence="1">UPF0301 protein HS_0009</fullName>
    </recommendedName>
</protein>
<accession>Q0I1B4</accession>
<gene>
    <name type="ordered locus">HS_0009</name>
</gene>
<dbReference type="EMBL" id="CP000436">
    <property type="protein sequence ID" value="ABI24290.1"/>
    <property type="molecule type" value="Genomic_DNA"/>
</dbReference>
<dbReference type="SMR" id="Q0I1B4"/>
<dbReference type="KEGG" id="hso:HS_0009"/>
<dbReference type="eggNOG" id="COG1678">
    <property type="taxonomic scope" value="Bacteria"/>
</dbReference>
<dbReference type="HOGENOM" id="CLU_057596_1_0_6"/>
<dbReference type="GO" id="GO:0005829">
    <property type="term" value="C:cytosol"/>
    <property type="evidence" value="ECO:0007669"/>
    <property type="project" value="TreeGrafter"/>
</dbReference>
<dbReference type="Gene3D" id="3.40.1740.10">
    <property type="entry name" value="VC0467-like"/>
    <property type="match status" value="1"/>
</dbReference>
<dbReference type="Gene3D" id="3.30.70.1300">
    <property type="entry name" value="VC0467-like domains"/>
    <property type="match status" value="1"/>
</dbReference>
<dbReference type="HAMAP" id="MF_00758">
    <property type="entry name" value="UPF0301"/>
    <property type="match status" value="1"/>
</dbReference>
<dbReference type="InterPro" id="IPR003774">
    <property type="entry name" value="AlgH-like"/>
</dbReference>
<dbReference type="NCBIfam" id="NF001266">
    <property type="entry name" value="PRK00228.1-1"/>
    <property type="match status" value="1"/>
</dbReference>
<dbReference type="PANTHER" id="PTHR30327">
    <property type="entry name" value="UNCHARACTERIZED PROTEIN YQGE"/>
    <property type="match status" value="1"/>
</dbReference>
<dbReference type="PANTHER" id="PTHR30327:SF1">
    <property type="entry name" value="UPF0301 PROTEIN YQGE"/>
    <property type="match status" value="1"/>
</dbReference>
<dbReference type="Pfam" id="PF02622">
    <property type="entry name" value="DUF179"/>
    <property type="match status" value="1"/>
</dbReference>
<dbReference type="SUPFAM" id="SSF143456">
    <property type="entry name" value="VC0467-like"/>
    <property type="match status" value="1"/>
</dbReference>
<name>Y009_HISS1</name>